<dbReference type="EMBL" id="U12027">
    <property type="protein sequence ID" value="AAA56922.1"/>
    <property type="molecule type" value="Genomic_DNA"/>
</dbReference>
<dbReference type="EMBL" id="Z48008">
    <property type="protein sequence ID" value="CAA88066.1"/>
    <property type="molecule type" value="Genomic_DNA"/>
</dbReference>
<dbReference type="EMBL" id="BK006938">
    <property type="protein sequence ID" value="DAA11854.1"/>
    <property type="molecule type" value="Genomic_DNA"/>
</dbReference>
<dbReference type="PIR" id="S50987">
    <property type="entry name" value="S50987"/>
</dbReference>
<dbReference type="RefSeq" id="NP_010289.3">
    <property type="nucleotide sequence ID" value="NM_001180314.3"/>
</dbReference>
<dbReference type="BioGRID" id="32059">
    <property type="interactions" value="196"/>
</dbReference>
<dbReference type="DIP" id="DIP-5173N"/>
<dbReference type="FunCoup" id="P40317">
    <property type="interactions" value="59"/>
</dbReference>
<dbReference type="IntAct" id="P40317">
    <property type="interactions" value="5"/>
</dbReference>
<dbReference type="MINT" id="P40317"/>
<dbReference type="STRING" id="4932.YDR006C"/>
<dbReference type="iPTMnet" id="P40317"/>
<dbReference type="PaxDb" id="4932-YDR006C"/>
<dbReference type="PeptideAtlas" id="P40317"/>
<dbReference type="EnsemblFungi" id="YDR006C_mRNA">
    <property type="protein sequence ID" value="YDR006C"/>
    <property type="gene ID" value="YDR006C"/>
</dbReference>
<dbReference type="GeneID" id="851569"/>
<dbReference type="KEGG" id="sce:YDR006C"/>
<dbReference type="AGR" id="SGD:S000002413"/>
<dbReference type="SGD" id="S000002413">
    <property type="gene designation" value="SOK1"/>
</dbReference>
<dbReference type="VEuPathDB" id="FungiDB:YDR006C"/>
<dbReference type="eggNOG" id="KOG1981">
    <property type="taxonomic scope" value="Eukaryota"/>
</dbReference>
<dbReference type="GeneTree" id="ENSGT00940000174079"/>
<dbReference type="HOGENOM" id="CLU_009875_0_0_1"/>
<dbReference type="InParanoid" id="P40317"/>
<dbReference type="OMA" id="NIYRHLY"/>
<dbReference type="OrthoDB" id="276323at2759"/>
<dbReference type="BioCyc" id="YEAST:G3O-29628-MONOMER"/>
<dbReference type="BioGRID-ORCS" id="851569">
    <property type="hits" value="0 hits in 10 CRISPR screens"/>
</dbReference>
<dbReference type="PRO" id="PR:P40317"/>
<dbReference type="Proteomes" id="UP000002311">
    <property type="component" value="Chromosome IV"/>
</dbReference>
<dbReference type="RNAct" id="P40317">
    <property type="molecule type" value="protein"/>
</dbReference>
<dbReference type="GO" id="GO:0005634">
    <property type="term" value="C:nucleus"/>
    <property type="evidence" value="ECO:0000314"/>
    <property type="project" value="SGD"/>
</dbReference>
<dbReference type="GO" id="GO:0141156">
    <property type="term" value="P:cAMP/PKA signal transduction"/>
    <property type="evidence" value="ECO:0000316"/>
    <property type="project" value="SGD"/>
</dbReference>
<dbReference type="GO" id="GO:0007165">
    <property type="term" value="P:signal transduction"/>
    <property type="evidence" value="ECO:0000318"/>
    <property type="project" value="GO_Central"/>
</dbReference>
<dbReference type="InterPro" id="IPR008862">
    <property type="entry name" value="Tcp11"/>
</dbReference>
<dbReference type="PANTHER" id="PTHR12832:SF11">
    <property type="entry name" value="LD23868P"/>
    <property type="match status" value="1"/>
</dbReference>
<dbReference type="PANTHER" id="PTHR12832">
    <property type="entry name" value="TESTIS-SPECIFIC PROTEIN PBS13 T-COMPLEX 11"/>
    <property type="match status" value="1"/>
</dbReference>
<dbReference type="Pfam" id="PF05794">
    <property type="entry name" value="Tcp11"/>
    <property type="match status" value="1"/>
</dbReference>
<protein>
    <recommendedName>
        <fullName>Protein SOK1</fullName>
    </recommendedName>
</protein>
<organism>
    <name type="scientific">Saccharomyces cerevisiae (strain ATCC 204508 / S288c)</name>
    <name type="common">Baker's yeast</name>
    <dbReference type="NCBI Taxonomy" id="559292"/>
    <lineage>
        <taxon>Eukaryota</taxon>
        <taxon>Fungi</taxon>
        <taxon>Dikarya</taxon>
        <taxon>Ascomycota</taxon>
        <taxon>Saccharomycotina</taxon>
        <taxon>Saccharomycetes</taxon>
        <taxon>Saccharomycetales</taxon>
        <taxon>Saccharomycetaceae</taxon>
        <taxon>Saccharomyces</taxon>
    </lineage>
</organism>
<feature type="chain" id="PRO_0000072035" description="Protein SOK1">
    <location>
        <begin position="1"/>
        <end position="901"/>
    </location>
</feature>
<feature type="region of interest" description="Disordered" evidence="1">
    <location>
        <begin position="1"/>
        <end position="87"/>
    </location>
</feature>
<feature type="region of interest" description="Disordered" evidence="1">
    <location>
        <begin position="106"/>
        <end position="139"/>
    </location>
</feature>
<feature type="region of interest" description="Disordered" evidence="1">
    <location>
        <begin position="162"/>
        <end position="231"/>
    </location>
</feature>
<feature type="compositionally biased region" description="Low complexity" evidence="1">
    <location>
        <begin position="10"/>
        <end position="51"/>
    </location>
</feature>
<feature type="compositionally biased region" description="Polar residues" evidence="1">
    <location>
        <begin position="74"/>
        <end position="87"/>
    </location>
</feature>
<feature type="compositionally biased region" description="Polar residues" evidence="1">
    <location>
        <begin position="106"/>
        <end position="115"/>
    </location>
</feature>
<feature type="compositionally biased region" description="Low complexity" evidence="1">
    <location>
        <begin position="116"/>
        <end position="138"/>
    </location>
</feature>
<feature type="compositionally biased region" description="Polar residues" evidence="1">
    <location>
        <begin position="220"/>
        <end position="231"/>
    </location>
</feature>
<feature type="modified residue" description="Phosphoserine" evidence="5">
    <location>
        <position position="40"/>
    </location>
</feature>
<feature type="modified residue" description="Phosphoserine" evidence="4">
    <location>
        <position position="53"/>
    </location>
</feature>
<feature type="modified residue" description="Phosphoserine" evidence="4 5">
    <location>
        <position position="191"/>
    </location>
</feature>
<feature type="modified residue" description="Phosphoserine" evidence="4 5">
    <location>
        <position position="193"/>
    </location>
</feature>
<feature type="modified residue" description="Phosphoserine" evidence="3 4 5">
    <location>
        <position position="245"/>
    </location>
</feature>
<feature type="sequence conflict" description="In Ref. 1; AAA56922." evidence="2" ref="1">
    <original>A</original>
    <variation>R</variation>
    <location>
        <position position="645"/>
    </location>
</feature>
<comment type="function">
    <text>High copy suppressor of a cyclic AMP-dependent protein kinase mutant.</text>
</comment>
<comment type="interaction">
    <interactant intactId="EBI-17664">
        <id>P40317</id>
    </interactant>
    <interactant intactId="EBI-8906">
        <id>P46958</id>
        <label>IDS2</label>
    </interactant>
    <organismsDiffer>false</organismsDiffer>
    <experiments>2</experiments>
</comment>
<comment type="subcellular location">
    <subcellularLocation>
        <location>Nucleus</location>
    </subcellularLocation>
</comment>
<comment type="similarity">
    <text evidence="2">Belongs to the TCP11 family.</text>
</comment>
<reference key="1">
    <citation type="journal article" date="1994" name="Mol. Cell. Biol.">
        <title>Suppression of a yeast cyclic AMP-dependent protein kinase defect by overexpression of SOK1, a yeast gene exhibiting sequence similarity to a developmentally regulated mouse gene.</title>
        <authorList>
            <person name="Ward M.P."/>
            <person name="Garrett S."/>
        </authorList>
    </citation>
    <scope>NUCLEOTIDE SEQUENCE [GENOMIC DNA] OF 337-901</scope>
    <source>
        <strain>SGY101</strain>
    </source>
</reference>
<reference key="2">
    <citation type="journal article" date="1997" name="Nature">
        <title>The nucleotide sequence of Saccharomyces cerevisiae chromosome IV.</title>
        <authorList>
            <person name="Jacq C."/>
            <person name="Alt-Moerbe J."/>
            <person name="Andre B."/>
            <person name="Arnold W."/>
            <person name="Bahr A."/>
            <person name="Ballesta J.P.G."/>
            <person name="Bargues M."/>
            <person name="Baron L."/>
            <person name="Becker A."/>
            <person name="Biteau N."/>
            <person name="Bloecker H."/>
            <person name="Blugeon C."/>
            <person name="Boskovic J."/>
            <person name="Brandt P."/>
            <person name="Brueckner M."/>
            <person name="Buitrago M.J."/>
            <person name="Coster F."/>
            <person name="Delaveau T."/>
            <person name="del Rey F."/>
            <person name="Dujon B."/>
            <person name="Eide L.G."/>
            <person name="Garcia-Cantalejo J.M."/>
            <person name="Goffeau A."/>
            <person name="Gomez-Peris A."/>
            <person name="Granotier C."/>
            <person name="Hanemann V."/>
            <person name="Hankeln T."/>
            <person name="Hoheisel J.D."/>
            <person name="Jaeger W."/>
            <person name="Jimenez A."/>
            <person name="Jonniaux J.-L."/>
            <person name="Kraemer C."/>
            <person name="Kuester H."/>
            <person name="Laamanen P."/>
            <person name="Legros Y."/>
            <person name="Louis E.J."/>
            <person name="Moeller-Rieker S."/>
            <person name="Monnet A."/>
            <person name="Moro M."/>
            <person name="Mueller-Auer S."/>
            <person name="Nussbaumer B."/>
            <person name="Paricio N."/>
            <person name="Paulin L."/>
            <person name="Perea J."/>
            <person name="Perez-Alonso M."/>
            <person name="Perez-Ortin J.E."/>
            <person name="Pohl T.M."/>
            <person name="Prydz H."/>
            <person name="Purnelle B."/>
            <person name="Rasmussen S.W."/>
            <person name="Remacha M.A."/>
            <person name="Revuelta J.L."/>
            <person name="Rieger M."/>
            <person name="Salom D."/>
            <person name="Saluz H.P."/>
            <person name="Saiz J.E."/>
            <person name="Saren A.-M."/>
            <person name="Schaefer M."/>
            <person name="Scharfe M."/>
            <person name="Schmidt E.R."/>
            <person name="Schneider C."/>
            <person name="Scholler P."/>
            <person name="Schwarz S."/>
            <person name="Soler-Mira A."/>
            <person name="Urrestarazu L.A."/>
            <person name="Verhasselt P."/>
            <person name="Vissers S."/>
            <person name="Voet M."/>
            <person name="Volckaert G."/>
            <person name="Wagner G."/>
            <person name="Wambutt R."/>
            <person name="Wedler E."/>
            <person name="Wedler H."/>
            <person name="Woelfl S."/>
            <person name="Harris D.E."/>
            <person name="Bowman S."/>
            <person name="Brown D."/>
            <person name="Churcher C.M."/>
            <person name="Connor R."/>
            <person name="Dedman K."/>
            <person name="Gentles S."/>
            <person name="Hamlin N."/>
            <person name="Hunt S."/>
            <person name="Jones L."/>
            <person name="McDonald S."/>
            <person name="Murphy L.D."/>
            <person name="Niblett D."/>
            <person name="Odell C."/>
            <person name="Oliver K."/>
            <person name="Rajandream M.A."/>
            <person name="Richards C."/>
            <person name="Shore L."/>
            <person name="Walsh S.V."/>
            <person name="Barrell B.G."/>
            <person name="Dietrich F.S."/>
            <person name="Mulligan J.T."/>
            <person name="Allen E."/>
            <person name="Araujo R."/>
            <person name="Aviles E."/>
            <person name="Berno A."/>
            <person name="Carpenter J."/>
            <person name="Chen E."/>
            <person name="Cherry J.M."/>
            <person name="Chung E."/>
            <person name="Duncan M."/>
            <person name="Hunicke-Smith S."/>
            <person name="Hyman R.W."/>
            <person name="Komp C."/>
            <person name="Lashkari D."/>
            <person name="Lew H."/>
            <person name="Lin D."/>
            <person name="Mosedale D."/>
            <person name="Nakahara K."/>
            <person name="Namath A."/>
            <person name="Oefner P."/>
            <person name="Oh C."/>
            <person name="Petel F.X."/>
            <person name="Roberts D."/>
            <person name="Schramm S."/>
            <person name="Schroeder M."/>
            <person name="Shogren T."/>
            <person name="Shroff N."/>
            <person name="Winant A."/>
            <person name="Yelton M.A."/>
            <person name="Botstein D."/>
            <person name="Davis R.W."/>
            <person name="Johnston M."/>
            <person name="Andrews S."/>
            <person name="Brinkman R."/>
            <person name="Cooper J."/>
            <person name="Ding H."/>
            <person name="Du Z."/>
            <person name="Favello A."/>
            <person name="Fulton L."/>
            <person name="Gattung S."/>
            <person name="Greco T."/>
            <person name="Hallsworth K."/>
            <person name="Hawkins J."/>
            <person name="Hillier L.W."/>
            <person name="Jier M."/>
            <person name="Johnson D."/>
            <person name="Johnston L."/>
            <person name="Kirsten J."/>
            <person name="Kucaba T."/>
            <person name="Langston Y."/>
            <person name="Latreille P."/>
            <person name="Le T."/>
            <person name="Mardis E."/>
            <person name="Menezes S."/>
            <person name="Miller N."/>
            <person name="Nhan M."/>
            <person name="Pauley A."/>
            <person name="Peluso D."/>
            <person name="Rifkin L."/>
            <person name="Riles L."/>
            <person name="Taich A."/>
            <person name="Trevaskis E."/>
            <person name="Vignati D."/>
            <person name="Wilcox L."/>
            <person name="Wohldman P."/>
            <person name="Vaudin M."/>
            <person name="Wilson R."/>
            <person name="Waterston R."/>
            <person name="Albermann K."/>
            <person name="Hani J."/>
            <person name="Heumann K."/>
            <person name="Kleine K."/>
            <person name="Mewes H.-W."/>
            <person name="Zollner A."/>
            <person name="Zaccaria P."/>
        </authorList>
    </citation>
    <scope>NUCLEOTIDE SEQUENCE [LARGE SCALE GENOMIC DNA]</scope>
    <source>
        <strain>ATCC 204508 / S288c</strain>
    </source>
</reference>
<reference key="3">
    <citation type="journal article" date="2014" name="G3 (Bethesda)">
        <title>The reference genome sequence of Saccharomyces cerevisiae: Then and now.</title>
        <authorList>
            <person name="Engel S.R."/>
            <person name="Dietrich F.S."/>
            <person name="Fisk D.G."/>
            <person name="Binkley G."/>
            <person name="Balakrishnan R."/>
            <person name="Costanzo M.C."/>
            <person name="Dwight S.S."/>
            <person name="Hitz B.C."/>
            <person name="Karra K."/>
            <person name="Nash R.S."/>
            <person name="Weng S."/>
            <person name="Wong E.D."/>
            <person name="Lloyd P."/>
            <person name="Skrzypek M.S."/>
            <person name="Miyasato S.R."/>
            <person name="Simison M."/>
            <person name="Cherry J.M."/>
        </authorList>
    </citation>
    <scope>GENOME REANNOTATION</scope>
    <source>
        <strain>ATCC 204508 / S288c</strain>
    </source>
</reference>
<reference key="4">
    <citation type="journal article" date="2007" name="J. Proteome Res.">
        <title>Large-scale phosphorylation analysis of alpha-factor-arrested Saccharomyces cerevisiae.</title>
        <authorList>
            <person name="Li X."/>
            <person name="Gerber S.A."/>
            <person name="Rudner A.D."/>
            <person name="Beausoleil S.A."/>
            <person name="Haas W."/>
            <person name="Villen J."/>
            <person name="Elias J.E."/>
            <person name="Gygi S.P."/>
        </authorList>
    </citation>
    <scope>PHOSPHORYLATION [LARGE SCALE ANALYSIS] AT SER-245</scope>
    <scope>IDENTIFICATION BY MASS SPECTROMETRY [LARGE SCALE ANALYSIS]</scope>
    <source>
        <strain>ADR376</strain>
    </source>
</reference>
<reference key="5">
    <citation type="journal article" date="2007" name="Proc. Natl. Acad. Sci. U.S.A.">
        <title>Analysis of phosphorylation sites on proteins from Saccharomyces cerevisiae by electron transfer dissociation (ETD) mass spectrometry.</title>
        <authorList>
            <person name="Chi A."/>
            <person name="Huttenhower C."/>
            <person name="Geer L.Y."/>
            <person name="Coon J.J."/>
            <person name="Syka J.E.P."/>
            <person name="Bai D.L."/>
            <person name="Shabanowitz J."/>
            <person name="Burke D.J."/>
            <person name="Troyanskaya O.G."/>
            <person name="Hunt D.F."/>
        </authorList>
    </citation>
    <scope>IDENTIFICATION BY MASS SPECTROMETRY [LARGE SCALE ANALYSIS]</scope>
</reference>
<reference key="6">
    <citation type="journal article" date="2008" name="Mol. Cell. Proteomics">
        <title>A multidimensional chromatography technology for in-depth phosphoproteome analysis.</title>
        <authorList>
            <person name="Albuquerque C.P."/>
            <person name="Smolka M.B."/>
            <person name="Payne S.H."/>
            <person name="Bafna V."/>
            <person name="Eng J."/>
            <person name="Zhou H."/>
        </authorList>
    </citation>
    <scope>PHOSPHORYLATION [LARGE SCALE ANALYSIS] AT SER-53; SER-191; SER-193 AND SER-245</scope>
    <scope>IDENTIFICATION BY MASS SPECTROMETRY [LARGE SCALE ANALYSIS]</scope>
</reference>
<reference key="7">
    <citation type="journal article" date="2009" name="Science">
        <title>Global analysis of Cdk1 substrate phosphorylation sites provides insights into evolution.</title>
        <authorList>
            <person name="Holt L.J."/>
            <person name="Tuch B.B."/>
            <person name="Villen J."/>
            <person name="Johnson A.D."/>
            <person name="Gygi S.P."/>
            <person name="Morgan D.O."/>
        </authorList>
    </citation>
    <scope>PHOSPHORYLATION [LARGE SCALE ANALYSIS] AT SER-40; SER-191; SER-193 AND SER-245</scope>
    <scope>IDENTIFICATION BY MASS SPECTROMETRY [LARGE SCALE ANALYSIS]</scope>
</reference>
<accession>P40317</accession>
<accession>D6VRZ4</accession>
<keyword id="KW-0539">Nucleus</keyword>
<keyword id="KW-0597">Phosphoprotein</keyword>
<keyword id="KW-1185">Reference proteome</keyword>
<proteinExistence type="evidence at protein level"/>
<name>SOK1_YEAST</name>
<sequence>MDQPRTHSGPTTASNPAPSSTNSSSAPSATNSKQERSSSSLSKPSSVVPSKDSPDGDAIAKTQAAALKNDMKSGDTSTLDGSSQNIIPNRASMQKYIDQSSDLLSRSSGVITPSMSLNASTNATNNDSSGNSANSSDLKIPIDRDNTIFKTFDTKTGQFLKNDDNEEEIRRNNKVDSIPPKNIYTNINNPSPSPPPSSKQPPSASAPQLPPATEPHKEQAAQQQPPGNASNFLRIFSNKKMRSHSVPTILHSSLRKLSSHNQYYRNQNILLNHPTPSGISKKKFSRNHHQPYLHSNNPLSSNPLSLKRAIFLNQQISGNASTNANNDNINNSTATSMTNQSFLSSSNFDLTLEDRINYIKATPTPVPFPPINLQGLKEIDLQEILKNPQLRHDIIFDPLLQFRPNLDGERGNKKRQLANIYWNDVQNEIYVYSKRPEIFQYNRSRLVPLFDTLRDVLLTIVPQKESPMINNVLDTELNIQELLKGSLIMSNLSGWLADLFKHHCAPMRDPWVDKMSNKFKEAERDSSLTRLIEGLRLVFQILETMKLDIANHQIRILRPALLSNAVEFEKQYFNTLIASKRVNLNTSLLWFDKKFNENVTAGLVRNPSSITIPDVYNICIRSIINLLSCRKMVREYPTPLSFDHARLILLRADIRQIVCILVCRLLFQQLVANDPSMDKATKEYVIHTYSTKRLKNEIISIITDEHGNCRWTKNTMSIAVHLCKVIDDLHREYDNNGSCEQARRPQLPSLDNSKITFAKSWLSKQTQPLSEVYGVLENRVFKSLEDAIFNRSECTIDGRVKQDFVYLYNTNNGNVGSTNTLSTTTDTASVKISPSLMSPSKTSTTTPTGNAIASRGLFAATELEEFENVYRHLYALINLHWSVFGPHYIEMLGDKVNKKGI</sequence>
<gene>
    <name type="primary">SOK1</name>
    <name type="ordered locus">YDR006C</name>
    <name type="ORF">YD8119.12C</name>
</gene>
<evidence type="ECO:0000256" key="1">
    <source>
        <dbReference type="SAM" id="MobiDB-lite"/>
    </source>
</evidence>
<evidence type="ECO:0000305" key="2"/>
<evidence type="ECO:0007744" key="3">
    <source>
    </source>
</evidence>
<evidence type="ECO:0007744" key="4">
    <source>
    </source>
</evidence>
<evidence type="ECO:0007744" key="5">
    <source>
    </source>
</evidence>